<gene>
    <name type="ordered locus">At4g16220</name>
    <name type="ORF">dl4150w</name>
    <name type="ORF">FCAALL.316</name>
</gene>
<feature type="signal peptide" evidence="2">
    <location>
        <begin position="1"/>
        <end position="24"/>
    </location>
</feature>
<feature type="chain" id="PRO_0000367404" description="GDSL esterase/lipase At4g16220">
    <location>
        <begin position="25"/>
        <end position="245"/>
    </location>
</feature>
<feature type="active site" description="Nucleophile" evidence="1">
    <location>
        <position position="37"/>
    </location>
</feature>
<sequence>MSSLVSRCQVIALLVLFFFGVCLAGKDIPANFVFGDSLVEVGNNNYLATLAKANNFPNGIDFGSPTGRFTNGRTIVDIIYQALGSDELTPPYLAPTTRGPLILNGANYAPGGSGPLNSPGSTNLDSWSPEQLKAMMFGVNYLAPVFFKKMDGQTIAISSLSTLSRAANLYRQILAKEVAKAIAQDTTTDLPKASHGVSSSSVKEELRPKETYFCDFYGRPIVYPILTSARRVTWARKINYDINNM</sequence>
<evidence type="ECO:0000250" key="1"/>
<evidence type="ECO:0000255" key="2"/>
<evidence type="ECO:0000305" key="3"/>
<keyword id="KW-0378">Hydrolase</keyword>
<keyword id="KW-0442">Lipid degradation</keyword>
<keyword id="KW-0443">Lipid metabolism</keyword>
<keyword id="KW-1185">Reference proteome</keyword>
<keyword id="KW-0964">Secreted</keyword>
<keyword id="KW-0732">Signal</keyword>
<name>GDL63_ARATH</name>
<proteinExistence type="inferred from homology"/>
<comment type="subcellular location">
    <subcellularLocation>
        <location evidence="3">Secreted</location>
    </subcellularLocation>
</comment>
<comment type="similarity">
    <text evidence="3">Belongs to the 'GDSL' lipolytic enzyme family.</text>
</comment>
<comment type="sequence caution" evidence="3">
    <conflict type="erroneous gene model prediction">
        <sequence resource="EMBL-CDS" id="CAB10401"/>
    </conflict>
</comment>
<comment type="sequence caution" evidence="3">
    <conflict type="erroneous gene model prediction">
        <sequence resource="EMBL-CDS" id="CAB78664"/>
    </conflict>
</comment>
<dbReference type="EC" id="3.1.1.-"/>
<dbReference type="EMBL" id="Z97340">
    <property type="protein sequence ID" value="CAB10401.1"/>
    <property type="status" value="ALT_SEQ"/>
    <property type="molecule type" value="Genomic_DNA"/>
</dbReference>
<dbReference type="EMBL" id="AL161543">
    <property type="protein sequence ID" value="CAB78664.1"/>
    <property type="status" value="ALT_SEQ"/>
    <property type="molecule type" value="Genomic_DNA"/>
</dbReference>
<dbReference type="EMBL" id="CP002687">
    <property type="protein sequence ID" value="AEE83718.2"/>
    <property type="molecule type" value="Genomic_DNA"/>
</dbReference>
<dbReference type="PIR" id="G71428">
    <property type="entry name" value="G71428"/>
</dbReference>
<dbReference type="RefSeq" id="NP_001319955.1">
    <property type="nucleotide sequence ID" value="NM_001341088.1"/>
</dbReference>
<dbReference type="FunCoup" id="O23469">
    <property type="interactions" value="109"/>
</dbReference>
<dbReference type="EnsemblPlants" id="AT4G16220.1">
    <property type="protein sequence ID" value="AT4G16220.1"/>
    <property type="gene ID" value="AT4G16220"/>
</dbReference>
<dbReference type="GeneID" id="827316"/>
<dbReference type="Gramene" id="AT4G16220.1">
    <property type="protein sequence ID" value="AT4G16220.1"/>
    <property type="gene ID" value="AT4G16220"/>
</dbReference>
<dbReference type="KEGG" id="ath:AT4G16220"/>
<dbReference type="Araport" id="AT4G16220"/>
<dbReference type="TAIR" id="AT4G16220"/>
<dbReference type="InParanoid" id="O23469"/>
<dbReference type="PhylomeDB" id="O23469"/>
<dbReference type="PRO" id="PR:O23469"/>
<dbReference type="Proteomes" id="UP000006548">
    <property type="component" value="Chromosome 4"/>
</dbReference>
<dbReference type="GO" id="GO:0005576">
    <property type="term" value="C:extracellular region"/>
    <property type="evidence" value="ECO:0007669"/>
    <property type="project" value="UniProtKB-SubCell"/>
</dbReference>
<dbReference type="GO" id="GO:0016787">
    <property type="term" value="F:hydrolase activity"/>
    <property type="evidence" value="ECO:0007669"/>
    <property type="project" value="UniProtKB-KW"/>
</dbReference>
<dbReference type="GO" id="GO:0016042">
    <property type="term" value="P:lipid catabolic process"/>
    <property type="evidence" value="ECO:0007669"/>
    <property type="project" value="UniProtKB-KW"/>
</dbReference>
<dbReference type="Gene3D" id="3.40.50.1110">
    <property type="entry name" value="SGNH hydrolase"/>
    <property type="match status" value="1"/>
</dbReference>
<dbReference type="InterPro" id="IPR051238">
    <property type="entry name" value="GDSL_esterase/lipase"/>
</dbReference>
<dbReference type="InterPro" id="IPR036514">
    <property type="entry name" value="SGNH_hydro_sf"/>
</dbReference>
<dbReference type="PANTHER" id="PTHR45650">
    <property type="entry name" value="GDSL-LIKE LIPASE/ACYLHYDROLASE-RELATED"/>
    <property type="match status" value="1"/>
</dbReference>
<dbReference type="PANTHER" id="PTHR45650:SF4">
    <property type="entry name" value="GDSL-LIKE LIPASE_ACYLHYDROLASE FAMILY PROTEIN, EXPRESSED"/>
    <property type="match status" value="1"/>
</dbReference>
<reference key="1">
    <citation type="journal article" date="1998" name="Nature">
        <title>Analysis of 1.9 Mb of contiguous sequence from chromosome 4 of Arabidopsis thaliana.</title>
        <authorList>
            <person name="Bevan M."/>
            <person name="Bancroft I."/>
            <person name="Bent E."/>
            <person name="Love K."/>
            <person name="Goodman H.M."/>
            <person name="Dean C."/>
            <person name="Bergkamp R."/>
            <person name="Dirkse W."/>
            <person name="van Staveren M."/>
            <person name="Stiekema W."/>
            <person name="Drost L."/>
            <person name="Ridley P."/>
            <person name="Hudson S.-A."/>
            <person name="Patel K."/>
            <person name="Murphy G."/>
            <person name="Piffanelli P."/>
            <person name="Wedler H."/>
            <person name="Wedler E."/>
            <person name="Wambutt R."/>
            <person name="Weitzenegger T."/>
            <person name="Pohl T."/>
            <person name="Terryn N."/>
            <person name="Gielen J."/>
            <person name="Villarroel R."/>
            <person name="De Clercq R."/>
            <person name="van Montagu M."/>
            <person name="Lecharny A."/>
            <person name="Aubourg S."/>
            <person name="Gy I."/>
            <person name="Kreis M."/>
            <person name="Lao N."/>
            <person name="Kavanagh T."/>
            <person name="Hempel S."/>
            <person name="Kotter P."/>
            <person name="Entian K.-D."/>
            <person name="Rieger M."/>
            <person name="Schaefer M."/>
            <person name="Funk B."/>
            <person name="Mueller-Auer S."/>
            <person name="Silvey M."/>
            <person name="James R."/>
            <person name="Monfort A."/>
            <person name="Pons A."/>
            <person name="Puigdomenech P."/>
            <person name="Douka A."/>
            <person name="Voukelatou E."/>
            <person name="Milioni D."/>
            <person name="Hatzopoulos P."/>
            <person name="Piravandi E."/>
            <person name="Obermaier B."/>
            <person name="Hilbert H."/>
            <person name="Duesterhoeft A."/>
            <person name="Moores T."/>
            <person name="Jones J.D.G."/>
            <person name="Eneva T."/>
            <person name="Palme K."/>
            <person name="Benes V."/>
            <person name="Rechmann S."/>
            <person name="Ansorge W."/>
            <person name="Cooke R."/>
            <person name="Berger C."/>
            <person name="Delseny M."/>
            <person name="Voet M."/>
            <person name="Volckaert G."/>
            <person name="Mewes H.-W."/>
            <person name="Klosterman S."/>
            <person name="Schueller C."/>
            <person name="Chalwatzis N."/>
        </authorList>
    </citation>
    <scope>NUCLEOTIDE SEQUENCE [LARGE SCALE GENOMIC DNA]</scope>
    <source>
        <strain>cv. Columbia</strain>
    </source>
</reference>
<reference key="2">
    <citation type="journal article" date="1999" name="Nature">
        <title>Sequence and analysis of chromosome 4 of the plant Arabidopsis thaliana.</title>
        <authorList>
            <person name="Mayer K.F.X."/>
            <person name="Schueller C."/>
            <person name="Wambutt R."/>
            <person name="Murphy G."/>
            <person name="Volckaert G."/>
            <person name="Pohl T."/>
            <person name="Duesterhoeft A."/>
            <person name="Stiekema W."/>
            <person name="Entian K.-D."/>
            <person name="Terryn N."/>
            <person name="Harris B."/>
            <person name="Ansorge W."/>
            <person name="Brandt P."/>
            <person name="Grivell L.A."/>
            <person name="Rieger M."/>
            <person name="Weichselgartner M."/>
            <person name="de Simone V."/>
            <person name="Obermaier B."/>
            <person name="Mache R."/>
            <person name="Mueller M."/>
            <person name="Kreis M."/>
            <person name="Delseny M."/>
            <person name="Puigdomenech P."/>
            <person name="Watson M."/>
            <person name="Schmidtheini T."/>
            <person name="Reichert B."/>
            <person name="Portetelle D."/>
            <person name="Perez-Alonso M."/>
            <person name="Boutry M."/>
            <person name="Bancroft I."/>
            <person name="Vos P."/>
            <person name="Hoheisel J."/>
            <person name="Zimmermann W."/>
            <person name="Wedler H."/>
            <person name="Ridley P."/>
            <person name="Langham S.-A."/>
            <person name="McCullagh B."/>
            <person name="Bilham L."/>
            <person name="Robben J."/>
            <person name="van der Schueren J."/>
            <person name="Grymonprez B."/>
            <person name="Chuang Y.-J."/>
            <person name="Vandenbussche F."/>
            <person name="Braeken M."/>
            <person name="Weltjens I."/>
            <person name="Voet M."/>
            <person name="Bastiaens I."/>
            <person name="Aert R."/>
            <person name="Defoor E."/>
            <person name="Weitzenegger T."/>
            <person name="Bothe G."/>
            <person name="Ramsperger U."/>
            <person name="Hilbert H."/>
            <person name="Braun M."/>
            <person name="Holzer E."/>
            <person name="Brandt A."/>
            <person name="Peters S."/>
            <person name="van Staveren M."/>
            <person name="Dirkse W."/>
            <person name="Mooijman P."/>
            <person name="Klein Lankhorst R."/>
            <person name="Rose M."/>
            <person name="Hauf J."/>
            <person name="Koetter P."/>
            <person name="Berneiser S."/>
            <person name="Hempel S."/>
            <person name="Feldpausch M."/>
            <person name="Lamberth S."/>
            <person name="Van den Daele H."/>
            <person name="De Keyser A."/>
            <person name="Buysshaert C."/>
            <person name="Gielen J."/>
            <person name="Villarroel R."/>
            <person name="De Clercq R."/>
            <person name="van Montagu M."/>
            <person name="Rogers J."/>
            <person name="Cronin A."/>
            <person name="Quail M.A."/>
            <person name="Bray-Allen S."/>
            <person name="Clark L."/>
            <person name="Doggett J."/>
            <person name="Hall S."/>
            <person name="Kay M."/>
            <person name="Lennard N."/>
            <person name="McLay K."/>
            <person name="Mayes R."/>
            <person name="Pettett A."/>
            <person name="Rajandream M.A."/>
            <person name="Lyne M."/>
            <person name="Benes V."/>
            <person name="Rechmann S."/>
            <person name="Borkova D."/>
            <person name="Bloecker H."/>
            <person name="Scharfe M."/>
            <person name="Grimm M."/>
            <person name="Loehnert T.-H."/>
            <person name="Dose S."/>
            <person name="de Haan M."/>
            <person name="Maarse A.C."/>
            <person name="Schaefer M."/>
            <person name="Mueller-Auer S."/>
            <person name="Gabel C."/>
            <person name="Fuchs M."/>
            <person name="Fartmann B."/>
            <person name="Granderath K."/>
            <person name="Dauner D."/>
            <person name="Herzl A."/>
            <person name="Neumann S."/>
            <person name="Argiriou A."/>
            <person name="Vitale D."/>
            <person name="Liguori R."/>
            <person name="Piravandi E."/>
            <person name="Massenet O."/>
            <person name="Quigley F."/>
            <person name="Clabauld G."/>
            <person name="Muendlein A."/>
            <person name="Felber R."/>
            <person name="Schnabl S."/>
            <person name="Hiller R."/>
            <person name="Schmidt W."/>
            <person name="Lecharny A."/>
            <person name="Aubourg S."/>
            <person name="Chefdor F."/>
            <person name="Cooke R."/>
            <person name="Berger C."/>
            <person name="Monfort A."/>
            <person name="Casacuberta E."/>
            <person name="Gibbons T."/>
            <person name="Weber N."/>
            <person name="Vandenbol M."/>
            <person name="Bargues M."/>
            <person name="Terol J."/>
            <person name="Torres A."/>
            <person name="Perez-Perez A."/>
            <person name="Purnelle B."/>
            <person name="Bent E."/>
            <person name="Johnson S."/>
            <person name="Tacon D."/>
            <person name="Jesse T."/>
            <person name="Heijnen L."/>
            <person name="Schwarz S."/>
            <person name="Scholler P."/>
            <person name="Heber S."/>
            <person name="Francs P."/>
            <person name="Bielke C."/>
            <person name="Frishman D."/>
            <person name="Haase D."/>
            <person name="Lemcke K."/>
            <person name="Mewes H.-W."/>
            <person name="Stocker S."/>
            <person name="Zaccaria P."/>
            <person name="Bevan M."/>
            <person name="Wilson R.K."/>
            <person name="de la Bastide M."/>
            <person name="Habermann K."/>
            <person name="Parnell L."/>
            <person name="Dedhia N."/>
            <person name="Gnoj L."/>
            <person name="Schutz K."/>
            <person name="Huang E."/>
            <person name="Spiegel L."/>
            <person name="Sekhon M."/>
            <person name="Murray J."/>
            <person name="Sheet P."/>
            <person name="Cordes M."/>
            <person name="Abu-Threideh J."/>
            <person name="Stoneking T."/>
            <person name="Kalicki J."/>
            <person name="Graves T."/>
            <person name="Harmon G."/>
            <person name="Edwards J."/>
            <person name="Latreille P."/>
            <person name="Courtney L."/>
            <person name="Cloud J."/>
            <person name="Abbott A."/>
            <person name="Scott K."/>
            <person name="Johnson D."/>
            <person name="Minx P."/>
            <person name="Bentley D."/>
            <person name="Fulton B."/>
            <person name="Miller N."/>
            <person name="Greco T."/>
            <person name="Kemp K."/>
            <person name="Kramer J."/>
            <person name="Fulton L."/>
            <person name="Mardis E."/>
            <person name="Dante M."/>
            <person name="Pepin K."/>
            <person name="Hillier L.W."/>
            <person name="Nelson J."/>
            <person name="Spieth J."/>
            <person name="Ryan E."/>
            <person name="Andrews S."/>
            <person name="Geisel C."/>
            <person name="Layman D."/>
            <person name="Du H."/>
            <person name="Ali J."/>
            <person name="Berghoff A."/>
            <person name="Jones K."/>
            <person name="Drone K."/>
            <person name="Cotton M."/>
            <person name="Joshu C."/>
            <person name="Antonoiu B."/>
            <person name="Zidanic M."/>
            <person name="Strong C."/>
            <person name="Sun H."/>
            <person name="Lamar B."/>
            <person name="Yordan C."/>
            <person name="Ma P."/>
            <person name="Zhong J."/>
            <person name="Preston R."/>
            <person name="Vil D."/>
            <person name="Shekher M."/>
            <person name="Matero A."/>
            <person name="Shah R."/>
            <person name="Swaby I.K."/>
            <person name="O'Shaughnessy A."/>
            <person name="Rodriguez M."/>
            <person name="Hoffman J."/>
            <person name="Till S."/>
            <person name="Granat S."/>
            <person name="Shohdy N."/>
            <person name="Hasegawa A."/>
            <person name="Hameed A."/>
            <person name="Lodhi M."/>
            <person name="Johnson A."/>
            <person name="Chen E."/>
            <person name="Marra M.A."/>
            <person name="Martienssen R."/>
            <person name="McCombie W.R."/>
        </authorList>
    </citation>
    <scope>NUCLEOTIDE SEQUENCE [LARGE SCALE GENOMIC DNA]</scope>
    <source>
        <strain>cv. Columbia</strain>
    </source>
</reference>
<reference key="3">
    <citation type="journal article" date="2017" name="Plant J.">
        <title>Araport11: a complete reannotation of the Arabidopsis thaliana reference genome.</title>
        <authorList>
            <person name="Cheng C.Y."/>
            <person name="Krishnakumar V."/>
            <person name="Chan A.P."/>
            <person name="Thibaud-Nissen F."/>
            <person name="Schobel S."/>
            <person name="Town C.D."/>
        </authorList>
    </citation>
    <scope>GENOME REANNOTATION</scope>
    <source>
        <strain>cv. Columbia</strain>
    </source>
</reference>
<reference key="4">
    <citation type="journal article" date="2004" name="Prog. Lipid Res.">
        <title>GDSL family of serine esterases/lipases.</title>
        <authorList>
            <person name="Akoh C.C."/>
            <person name="Lee G.-C."/>
            <person name="Liaw Y.-C."/>
            <person name="Huang T.-H."/>
            <person name="Shaw J.-F."/>
        </authorList>
    </citation>
    <scope>REVIEW</scope>
</reference>
<reference key="5">
    <citation type="journal article" date="2008" name="Pak. J. Biol. Sci.">
        <title>Sequence analysis of GDSL lipase gene family in Arabidopsis thaliana.</title>
        <authorList>
            <person name="Ling H."/>
        </authorList>
    </citation>
    <scope>GENE FAMILY</scope>
</reference>
<organism>
    <name type="scientific">Arabidopsis thaliana</name>
    <name type="common">Mouse-ear cress</name>
    <dbReference type="NCBI Taxonomy" id="3702"/>
    <lineage>
        <taxon>Eukaryota</taxon>
        <taxon>Viridiplantae</taxon>
        <taxon>Streptophyta</taxon>
        <taxon>Embryophyta</taxon>
        <taxon>Tracheophyta</taxon>
        <taxon>Spermatophyta</taxon>
        <taxon>Magnoliopsida</taxon>
        <taxon>eudicotyledons</taxon>
        <taxon>Gunneridae</taxon>
        <taxon>Pentapetalae</taxon>
        <taxon>rosids</taxon>
        <taxon>malvids</taxon>
        <taxon>Brassicales</taxon>
        <taxon>Brassicaceae</taxon>
        <taxon>Camelineae</taxon>
        <taxon>Arabidopsis</taxon>
    </lineage>
</organism>
<accession>O23469</accession>
<accession>F4JLQ9</accession>
<protein>
    <recommendedName>
        <fullName>GDSL esterase/lipase At4g16220</fullName>
        <ecNumber>3.1.1.-</ecNumber>
    </recommendedName>
    <alternativeName>
        <fullName>Extracellular lipase At4g16220</fullName>
    </alternativeName>
</protein>